<keyword id="KW-0997">Cell inner membrane</keyword>
<keyword id="KW-1003">Cell membrane</keyword>
<keyword id="KW-0472">Membrane</keyword>
<keyword id="KW-1185">Reference proteome</keyword>
<keyword id="KW-0812">Transmembrane</keyword>
<keyword id="KW-1133">Transmembrane helix</keyword>
<gene>
    <name type="primary">yqjE</name>
    <name type="ordered locus">Z4453</name>
    <name type="ordered locus">ECs3981</name>
</gene>
<evidence type="ECO:0000250" key="1"/>
<evidence type="ECO:0000255" key="2"/>
<dbReference type="EMBL" id="AE005174">
    <property type="protein sequence ID" value="AAG58232.1"/>
    <property type="molecule type" value="Genomic_DNA"/>
</dbReference>
<dbReference type="EMBL" id="BA000007">
    <property type="protein sequence ID" value="BAB37404.1"/>
    <property type="molecule type" value="Genomic_DNA"/>
</dbReference>
<dbReference type="PIR" id="D85971">
    <property type="entry name" value="D85971"/>
</dbReference>
<dbReference type="PIR" id="E91126">
    <property type="entry name" value="E91126"/>
</dbReference>
<dbReference type="RefSeq" id="NP_312008.1">
    <property type="nucleotide sequence ID" value="NC_002695.1"/>
</dbReference>
<dbReference type="RefSeq" id="WP_000785722.1">
    <property type="nucleotide sequence ID" value="NZ_VOAI01000009.1"/>
</dbReference>
<dbReference type="SMR" id="P64586"/>
<dbReference type="STRING" id="155864.Z4453"/>
<dbReference type="GeneID" id="916196"/>
<dbReference type="KEGG" id="ece:Z4453"/>
<dbReference type="KEGG" id="ecs:ECs_3981"/>
<dbReference type="PATRIC" id="fig|386585.9.peg.4155"/>
<dbReference type="eggNOG" id="COG5393">
    <property type="taxonomic scope" value="Bacteria"/>
</dbReference>
<dbReference type="HOGENOM" id="CLU_136851_0_0_6"/>
<dbReference type="OMA" id="FWAIDPA"/>
<dbReference type="Proteomes" id="UP000000558">
    <property type="component" value="Chromosome"/>
</dbReference>
<dbReference type="Proteomes" id="UP000002519">
    <property type="component" value="Chromosome"/>
</dbReference>
<dbReference type="GO" id="GO:0005886">
    <property type="term" value="C:plasma membrane"/>
    <property type="evidence" value="ECO:0007669"/>
    <property type="project" value="UniProtKB-SubCell"/>
</dbReference>
<dbReference type="InterPro" id="IPR009937">
    <property type="entry name" value="Phage_holin_3_6"/>
</dbReference>
<dbReference type="Pfam" id="PF07332">
    <property type="entry name" value="Phage_holin_3_6"/>
    <property type="match status" value="1"/>
</dbReference>
<feature type="chain" id="PRO_0000169433" description="Inner membrane protein YqjE">
    <location>
        <begin position="1"/>
        <end position="134"/>
    </location>
</feature>
<feature type="topological domain" description="Cytoplasmic" evidence="2">
    <location>
        <begin position="1"/>
        <end position="55"/>
    </location>
</feature>
<feature type="transmembrane region" description="Helical" evidence="2">
    <location>
        <begin position="56"/>
        <end position="76"/>
    </location>
</feature>
<feature type="topological domain" description="Periplasmic" evidence="2">
    <location>
        <begin position="77"/>
        <end position="83"/>
    </location>
</feature>
<feature type="transmembrane region" description="Helical" evidence="2">
    <location>
        <begin position="84"/>
        <end position="104"/>
    </location>
</feature>
<feature type="topological domain" description="Cytoplasmic" evidence="2">
    <location>
        <begin position="105"/>
        <end position="134"/>
    </location>
</feature>
<protein>
    <recommendedName>
        <fullName>Inner membrane protein YqjE</fullName>
    </recommendedName>
</protein>
<accession>P64586</accession>
<accession>P42618</accession>
<sequence length="134" mass="15147">MADTHHAQGPGKSVLGIGQRIVSIMVEMVETRLRLAVVELEEEKANLFQLLLMLGLTMLFAAFGLMSLMVLIIWAVDPQYRLNAMIATTVVLLLLALIGGIWTLRKSRKSTLLRHTRHELANDRQLLEEESREQ</sequence>
<organism>
    <name type="scientific">Escherichia coli O157:H7</name>
    <dbReference type="NCBI Taxonomy" id="83334"/>
    <lineage>
        <taxon>Bacteria</taxon>
        <taxon>Pseudomonadati</taxon>
        <taxon>Pseudomonadota</taxon>
        <taxon>Gammaproteobacteria</taxon>
        <taxon>Enterobacterales</taxon>
        <taxon>Enterobacteriaceae</taxon>
        <taxon>Escherichia</taxon>
    </lineage>
</organism>
<comment type="subcellular location">
    <subcellularLocation>
        <location evidence="1">Cell inner membrane</location>
        <topology evidence="1">Multi-pass membrane protein</topology>
    </subcellularLocation>
</comment>
<proteinExistence type="inferred from homology"/>
<name>YQJE_ECO57</name>
<reference key="1">
    <citation type="journal article" date="2001" name="Nature">
        <title>Genome sequence of enterohaemorrhagic Escherichia coli O157:H7.</title>
        <authorList>
            <person name="Perna N.T."/>
            <person name="Plunkett G. III"/>
            <person name="Burland V."/>
            <person name="Mau B."/>
            <person name="Glasner J.D."/>
            <person name="Rose D.J."/>
            <person name="Mayhew G.F."/>
            <person name="Evans P.S."/>
            <person name="Gregor J."/>
            <person name="Kirkpatrick H.A."/>
            <person name="Posfai G."/>
            <person name="Hackett J."/>
            <person name="Klink S."/>
            <person name="Boutin A."/>
            <person name="Shao Y."/>
            <person name="Miller L."/>
            <person name="Grotbeck E.J."/>
            <person name="Davis N.W."/>
            <person name="Lim A."/>
            <person name="Dimalanta E.T."/>
            <person name="Potamousis K."/>
            <person name="Apodaca J."/>
            <person name="Anantharaman T.S."/>
            <person name="Lin J."/>
            <person name="Yen G."/>
            <person name="Schwartz D.C."/>
            <person name="Welch R.A."/>
            <person name="Blattner F.R."/>
        </authorList>
    </citation>
    <scope>NUCLEOTIDE SEQUENCE [LARGE SCALE GENOMIC DNA]</scope>
    <source>
        <strain>O157:H7 / EDL933 / ATCC 700927 / EHEC</strain>
    </source>
</reference>
<reference key="2">
    <citation type="journal article" date="2001" name="DNA Res.">
        <title>Complete genome sequence of enterohemorrhagic Escherichia coli O157:H7 and genomic comparison with a laboratory strain K-12.</title>
        <authorList>
            <person name="Hayashi T."/>
            <person name="Makino K."/>
            <person name="Ohnishi M."/>
            <person name="Kurokawa K."/>
            <person name="Ishii K."/>
            <person name="Yokoyama K."/>
            <person name="Han C.-G."/>
            <person name="Ohtsubo E."/>
            <person name="Nakayama K."/>
            <person name="Murata T."/>
            <person name="Tanaka M."/>
            <person name="Tobe T."/>
            <person name="Iida T."/>
            <person name="Takami H."/>
            <person name="Honda T."/>
            <person name="Sasakawa C."/>
            <person name="Ogasawara N."/>
            <person name="Yasunaga T."/>
            <person name="Kuhara S."/>
            <person name="Shiba T."/>
            <person name="Hattori M."/>
            <person name="Shinagawa H."/>
        </authorList>
    </citation>
    <scope>NUCLEOTIDE SEQUENCE [LARGE SCALE GENOMIC DNA]</scope>
    <source>
        <strain>O157:H7 / Sakai / RIMD 0509952 / EHEC</strain>
    </source>
</reference>